<sequence length="168" mass="19466">MSAVDPIADMFSAIKNAIMRRDAFLYVPSSKMKERILEVLKREGFIQDWEALKGEKYEEEFKKMKELAEKSPNPKMRRYLQQLIDYNKGTQYPLKIYLKYLDPKKRRSALTNIVRVSKGGRRVYAGVRTMPYVKRGLGIAIVSTDAGVMTDHEARKLRKGGEVIAFVW</sequence>
<evidence type="ECO:0000255" key="1">
    <source>
        <dbReference type="HAMAP-Rule" id="MF_01302"/>
    </source>
</evidence>
<evidence type="ECO:0000305" key="2"/>
<dbReference type="EMBL" id="AF040101">
    <property type="protein sequence ID" value="AAD08797.1"/>
    <property type="molecule type" value="Genomic_DNA"/>
</dbReference>
<dbReference type="SMR" id="Q9ZI39"/>
<dbReference type="GO" id="GO:1990904">
    <property type="term" value="C:ribonucleoprotein complex"/>
    <property type="evidence" value="ECO:0007669"/>
    <property type="project" value="UniProtKB-KW"/>
</dbReference>
<dbReference type="GO" id="GO:0005840">
    <property type="term" value="C:ribosome"/>
    <property type="evidence" value="ECO:0007669"/>
    <property type="project" value="UniProtKB-KW"/>
</dbReference>
<dbReference type="GO" id="GO:0019843">
    <property type="term" value="F:rRNA binding"/>
    <property type="evidence" value="ECO:0007669"/>
    <property type="project" value="UniProtKB-UniRule"/>
</dbReference>
<dbReference type="GO" id="GO:0003735">
    <property type="term" value="F:structural constituent of ribosome"/>
    <property type="evidence" value="ECO:0007669"/>
    <property type="project" value="InterPro"/>
</dbReference>
<dbReference type="GO" id="GO:0006412">
    <property type="term" value="P:translation"/>
    <property type="evidence" value="ECO:0007669"/>
    <property type="project" value="UniProtKB-UniRule"/>
</dbReference>
<dbReference type="FunFam" id="3.30.1490.10:FF:000001">
    <property type="entry name" value="30S ribosomal protein S8"/>
    <property type="match status" value="1"/>
</dbReference>
<dbReference type="Gene3D" id="3.30.1370.30">
    <property type="match status" value="1"/>
</dbReference>
<dbReference type="Gene3D" id="3.30.1490.10">
    <property type="match status" value="1"/>
</dbReference>
<dbReference type="HAMAP" id="MF_01302_B">
    <property type="entry name" value="Ribosomal_uS8_B"/>
    <property type="match status" value="1"/>
</dbReference>
<dbReference type="InterPro" id="IPR000630">
    <property type="entry name" value="Ribosomal_uS8"/>
</dbReference>
<dbReference type="InterPro" id="IPR047863">
    <property type="entry name" value="Ribosomal_uS8_CS"/>
</dbReference>
<dbReference type="InterPro" id="IPR035987">
    <property type="entry name" value="Ribosomal_uS8_sf"/>
</dbReference>
<dbReference type="PANTHER" id="PTHR11758">
    <property type="entry name" value="40S RIBOSOMAL PROTEIN S15A"/>
    <property type="match status" value="1"/>
</dbReference>
<dbReference type="Pfam" id="PF00410">
    <property type="entry name" value="Ribosomal_S8"/>
    <property type="match status" value="1"/>
</dbReference>
<dbReference type="SUPFAM" id="SSF56047">
    <property type="entry name" value="Ribosomal protein S8"/>
    <property type="match status" value="1"/>
</dbReference>
<dbReference type="PROSITE" id="PS00053">
    <property type="entry name" value="RIBOSOMAL_S8"/>
    <property type="match status" value="1"/>
</dbReference>
<gene>
    <name evidence="1" type="primary">rpsH</name>
    <name evidence="1" type="synonym">rps8</name>
</gene>
<keyword id="KW-0687">Ribonucleoprotein</keyword>
<keyword id="KW-0689">Ribosomal protein</keyword>
<keyword id="KW-0694">RNA-binding</keyword>
<keyword id="KW-0699">rRNA-binding</keyword>
<reference key="1">
    <citation type="journal article" date="2000" name="J. Mol. Evol.">
        <title>Phylogenetic depth of the bacterial genera Aquifex and Thermotoga inferred from analysis of ribosomal protein, elongation factor, and RNA polymerase subunit sequences.</title>
        <authorList>
            <person name="Bocchetta M."/>
            <person name="Gribaldo S."/>
            <person name="Sanangelantoni A.M."/>
            <person name="Cammarano P."/>
        </authorList>
    </citation>
    <scope>NUCLEOTIDE SEQUENCE [GENOMIC DNA]</scope>
    <source>
        <strain>DSM 6858 / JCM 9492 / Kol5A</strain>
    </source>
</reference>
<protein>
    <recommendedName>
        <fullName evidence="1">Small ribosomal subunit protein uS8</fullName>
    </recommendedName>
    <alternativeName>
        <fullName evidence="2">30S ribosomal protein S8</fullName>
    </alternativeName>
</protein>
<proteinExistence type="inferred from homology"/>
<organism>
    <name type="scientific">Aquifex pyrophilus</name>
    <dbReference type="NCBI Taxonomy" id="2714"/>
    <lineage>
        <taxon>Bacteria</taxon>
        <taxon>Pseudomonadati</taxon>
        <taxon>Aquificota</taxon>
        <taxon>Aquificia</taxon>
        <taxon>Aquificales</taxon>
        <taxon>Aquificaceae</taxon>
        <taxon>Aquifex</taxon>
    </lineage>
</organism>
<accession>Q9ZI39</accession>
<feature type="chain" id="PRO_0000126355" description="Small ribosomal subunit protein uS8">
    <location>
        <begin position="1"/>
        <end position="168"/>
    </location>
</feature>
<feature type="region of interest" description="Not found in other S8 sequences">
    <location>
        <begin position="59"/>
        <end position="93"/>
    </location>
</feature>
<name>RS8_AQUPY</name>
<comment type="function">
    <text evidence="1">One of the primary rRNA binding proteins, it binds directly to 16S rRNA central domain where it helps coordinate assembly of the platform of the 30S subunit.</text>
</comment>
<comment type="subunit">
    <text evidence="1">Part of the 30S ribosomal subunit. Contacts proteins S5 and S12.</text>
</comment>
<comment type="similarity">
    <text evidence="1">Belongs to the universal ribosomal protein uS8 family.</text>
</comment>